<protein>
    <recommendedName>
        <fullName evidence="1">Phosphatidylserine decarboxylase proenzyme</fullName>
        <ecNumber evidence="1">4.1.1.65</ecNumber>
    </recommendedName>
    <component>
        <recommendedName>
            <fullName evidence="1">Phosphatidylserine decarboxylase alpha chain</fullName>
        </recommendedName>
    </component>
    <component>
        <recommendedName>
            <fullName evidence="1">Phosphatidylserine decarboxylase beta chain</fullName>
        </recommendedName>
    </component>
</protein>
<sequence>MDKVKIALQYMLPKHLLSRLVGKLAASEAGALTTAAIKWFIKQYKIDMSEAAQSEPEAYKSFNDFFTRALKPGIRPINTAANIMVHPVDGAVSQLGPIKDGRIFQAKGHHYSSLTLLGDQAEDAKRFEGGDFATIYLAPKDYHRIHMPIKGTLSKMTYVPGELFSVNPLTARHVPGLFARNERVVAIFETELGPLAMVLVGATIVASIETVWAGTITPPTGKQVFTWEYPTVGPDAITLDKGEEMGRFKLGSTVVMLFAKEAIDTFAEGVEPEAVTRMGQAFANLKDQSSAD</sequence>
<accession>Q0HMP8</accession>
<reference key="1">
    <citation type="submission" date="2006-08" db="EMBL/GenBank/DDBJ databases">
        <title>Complete sequence of Shewanella sp. MR-4.</title>
        <authorList>
            <consortium name="US DOE Joint Genome Institute"/>
            <person name="Copeland A."/>
            <person name="Lucas S."/>
            <person name="Lapidus A."/>
            <person name="Barry K."/>
            <person name="Detter J.C."/>
            <person name="Glavina del Rio T."/>
            <person name="Hammon N."/>
            <person name="Israni S."/>
            <person name="Dalin E."/>
            <person name="Tice H."/>
            <person name="Pitluck S."/>
            <person name="Kiss H."/>
            <person name="Brettin T."/>
            <person name="Bruce D."/>
            <person name="Han C."/>
            <person name="Tapia R."/>
            <person name="Gilna P."/>
            <person name="Schmutz J."/>
            <person name="Larimer F."/>
            <person name="Land M."/>
            <person name="Hauser L."/>
            <person name="Kyrpides N."/>
            <person name="Mikhailova N."/>
            <person name="Nealson K."/>
            <person name="Konstantinidis K."/>
            <person name="Klappenbach J."/>
            <person name="Tiedje J."/>
            <person name="Richardson P."/>
        </authorList>
    </citation>
    <scope>NUCLEOTIDE SEQUENCE [LARGE SCALE GENOMIC DNA]</scope>
    <source>
        <strain>MR-4</strain>
    </source>
</reference>
<keyword id="KW-1003">Cell membrane</keyword>
<keyword id="KW-0210">Decarboxylase</keyword>
<keyword id="KW-0444">Lipid biosynthesis</keyword>
<keyword id="KW-0443">Lipid metabolism</keyword>
<keyword id="KW-0456">Lyase</keyword>
<keyword id="KW-0472">Membrane</keyword>
<keyword id="KW-0594">Phospholipid biosynthesis</keyword>
<keyword id="KW-1208">Phospholipid metabolism</keyword>
<keyword id="KW-0670">Pyruvate</keyword>
<keyword id="KW-0865">Zymogen</keyword>
<feature type="chain" id="PRO_0000262153" description="Phosphatidylserine decarboxylase beta chain" evidence="1">
    <location>
        <begin position="1"/>
        <end position="251"/>
    </location>
</feature>
<feature type="chain" id="PRO_0000262154" description="Phosphatidylserine decarboxylase alpha chain" evidence="1">
    <location>
        <begin position="252"/>
        <end position="292"/>
    </location>
</feature>
<feature type="active site" description="Charge relay system; for autoendoproteolytic cleavage activity" evidence="1">
    <location>
        <position position="89"/>
    </location>
</feature>
<feature type="active site" description="Charge relay system; for autoendoproteolytic cleavage activity" evidence="1">
    <location>
        <position position="146"/>
    </location>
</feature>
<feature type="active site" description="Charge relay system; for autoendoproteolytic cleavage activity" evidence="1">
    <location>
        <position position="252"/>
    </location>
</feature>
<feature type="active site" description="Schiff-base intermediate with substrate; via pyruvic acid; for decarboxylase activity" evidence="1">
    <location>
        <position position="252"/>
    </location>
</feature>
<feature type="site" description="Cleavage (non-hydrolytic); by autocatalysis" evidence="1">
    <location>
        <begin position="251"/>
        <end position="252"/>
    </location>
</feature>
<feature type="modified residue" description="Pyruvic acid (Ser); by autocatalysis" evidence="1">
    <location>
        <position position="252"/>
    </location>
</feature>
<proteinExistence type="inferred from homology"/>
<evidence type="ECO:0000255" key="1">
    <source>
        <dbReference type="HAMAP-Rule" id="MF_00662"/>
    </source>
</evidence>
<dbReference type="EC" id="4.1.1.65" evidence="1"/>
<dbReference type="EMBL" id="CP000446">
    <property type="protein sequence ID" value="ABI37669.1"/>
    <property type="molecule type" value="Genomic_DNA"/>
</dbReference>
<dbReference type="RefSeq" id="WP_011621390.1">
    <property type="nucleotide sequence ID" value="NC_008321.1"/>
</dbReference>
<dbReference type="SMR" id="Q0HMP8"/>
<dbReference type="KEGG" id="she:Shewmr4_0589"/>
<dbReference type="HOGENOM" id="CLU_029061_4_1_6"/>
<dbReference type="UniPathway" id="UPA00558">
    <property type="reaction ID" value="UER00616"/>
</dbReference>
<dbReference type="GO" id="GO:0005886">
    <property type="term" value="C:plasma membrane"/>
    <property type="evidence" value="ECO:0007669"/>
    <property type="project" value="UniProtKB-SubCell"/>
</dbReference>
<dbReference type="GO" id="GO:0004609">
    <property type="term" value="F:phosphatidylserine decarboxylase activity"/>
    <property type="evidence" value="ECO:0007669"/>
    <property type="project" value="UniProtKB-UniRule"/>
</dbReference>
<dbReference type="GO" id="GO:0006646">
    <property type="term" value="P:phosphatidylethanolamine biosynthetic process"/>
    <property type="evidence" value="ECO:0007669"/>
    <property type="project" value="UniProtKB-UniRule"/>
</dbReference>
<dbReference type="HAMAP" id="MF_00662">
    <property type="entry name" value="PS_decarb_PSD_B_type1"/>
    <property type="match status" value="1"/>
</dbReference>
<dbReference type="InterPro" id="IPR003817">
    <property type="entry name" value="PS_Dcarbxylase"/>
</dbReference>
<dbReference type="InterPro" id="IPR033177">
    <property type="entry name" value="PSD-B"/>
</dbReference>
<dbReference type="InterPro" id="IPR033178">
    <property type="entry name" value="PSD_type1_pro"/>
</dbReference>
<dbReference type="NCBIfam" id="TIGR00163">
    <property type="entry name" value="PS_decarb"/>
    <property type="match status" value="1"/>
</dbReference>
<dbReference type="PANTHER" id="PTHR10067">
    <property type="entry name" value="PHOSPHATIDYLSERINE DECARBOXYLASE"/>
    <property type="match status" value="1"/>
</dbReference>
<dbReference type="PANTHER" id="PTHR10067:SF6">
    <property type="entry name" value="PHOSPHATIDYLSERINE DECARBOXYLASE PROENZYME, MITOCHONDRIAL"/>
    <property type="match status" value="1"/>
</dbReference>
<dbReference type="Pfam" id="PF02666">
    <property type="entry name" value="PS_Dcarbxylase"/>
    <property type="match status" value="1"/>
</dbReference>
<comment type="function">
    <text evidence="1">Catalyzes the formation of phosphatidylethanolamine (PtdEtn) from phosphatidylserine (PtdSer).</text>
</comment>
<comment type="catalytic activity">
    <reaction evidence="1">
        <text>a 1,2-diacyl-sn-glycero-3-phospho-L-serine + H(+) = a 1,2-diacyl-sn-glycero-3-phosphoethanolamine + CO2</text>
        <dbReference type="Rhea" id="RHEA:20828"/>
        <dbReference type="ChEBI" id="CHEBI:15378"/>
        <dbReference type="ChEBI" id="CHEBI:16526"/>
        <dbReference type="ChEBI" id="CHEBI:57262"/>
        <dbReference type="ChEBI" id="CHEBI:64612"/>
        <dbReference type="EC" id="4.1.1.65"/>
    </reaction>
</comment>
<comment type="cofactor">
    <cofactor evidence="1">
        <name>pyruvate</name>
        <dbReference type="ChEBI" id="CHEBI:15361"/>
    </cofactor>
    <text evidence="1">Binds 1 pyruvoyl group covalently per subunit.</text>
</comment>
<comment type="pathway">
    <text evidence="1">Phospholipid metabolism; phosphatidylethanolamine biosynthesis; phosphatidylethanolamine from CDP-diacylglycerol: step 2/2.</text>
</comment>
<comment type="subunit">
    <text evidence="1">Heterodimer of a large membrane-associated beta subunit and a small pyruvoyl-containing alpha subunit.</text>
</comment>
<comment type="subcellular location">
    <subcellularLocation>
        <location evidence="1">Cell membrane</location>
        <topology evidence="1">Peripheral membrane protein</topology>
    </subcellularLocation>
</comment>
<comment type="PTM">
    <text evidence="1">Is synthesized initially as an inactive proenzyme. Formation of the active enzyme involves a self-maturation process in which the active site pyruvoyl group is generated from an internal serine residue via an autocatalytic post-translational modification. Two non-identical subunits are generated from the proenzyme in this reaction, and the pyruvate is formed at the N-terminus of the alpha chain, which is derived from the carboxyl end of the proenzyme. The autoendoproteolytic cleavage occurs by a canonical serine protease mechanism, in which the side chain hydroxyl group of the serine supplies its oxygen atom to form the C-terminus of the beta chain, while the remainder of the serine residue undergoes an oxidative deamination to produce ammonia and the pyruvoyl prosthetic group on the alpha chain. During this reaction, the Ser that is part of the protease active site of the proenzyme becomes the pyruvoyl prosthetic group, which constitutes an essential element of the active site of the mature decarboxylase.</text>
</comment>
<comment type="similarity">
    <text evidence="1">Belongs to the phosphatidylserine decarboxylase family. PSD-B subfamily. Prokaryotic type I sub-subfamily.</text>
</comment>
<gene>
    <name evidence="1" type="primary">psd</name>
    <name type="ordered locus">Shewmr4_0589</name>
</gene>
<organism>
    <name type="scientific">Shewanella sp. (strain MR-4)</name>
    <dbReference type="NCBI Taxonomy" id="60480"/>
    <lineage>
        <taxon>Bacteria</taxon>
        <taxon>Pseudomonadati</taxon>
        <taxon>Pseudomonadota</taxon>
        <taxon>Gammaproteobacteria</taxon>
        <taxon>Alteromonadales</taxon>
        <taxon>Shewanellaceae</taxon>
        <taxon>Shewanella</taxon>
    </lineage>
</organism>
<name>PSD_SHESM</name>